<protein>
    <recommendedName>
        <fullName evidence="1">DNA mismatch repair protein MutL</fullName>
    </recommendedName>
</protein>
<reference key="1">
    <citation type="journal article" date="2005" name="J. Bacteriol.">
        <title>Insights on evolution of virulence and resistance from the complete genome analysis of an early methicillin-resistant Staphylococcus aureus strain and a biofilm-producing methicillin-resistant Staphylococcus epidermidis strain.</title>
        <authorList>
            <person name="Gill S.R."/>
            <person name="Fouts D.E."/>
            <person name="Archer G.L."/>
            <person name="Mongodin E.F."/>
            <person name="DeBoy R.T."/>
            <person name="Ravel J."/>
            <person name="Paulsen I.T."/>
            <person name="Kolonay J.F."/>
            <person name="Brinkac L.M."/>
            <person name="Beanan M.J."/>
            <person name="Dodson R.J."/>
            <person name="Daugherty S.C."/>
            <person name="Madupu R."/>
            <person name="Angiuoli S.V."/>
            <person name="Durkin A.S."/>
            <person name="Haft D.H."/>
            <person name="Vamathevan J.J."/>
            <person name="Khouri H."/>
            <person name="Utterback T.R."/>
            <person name="Lee C."/>
            <person name="Dimitrov G."/>
            <person name="Jiang L."/>
            <person name="Qin H."/>
            <person name="Weidman J."/>
            <person name="Tran K."/>
            <person name="Kang K.H."/>
            <person name="Hance I.R."/>
            <person name="Nelson K.E."/>
            <person name="Fraser C.M."/>
        </authorList>
    </citation>
    <scope>NUCLEOTIDE SEQUENCE [LARGE SCALE GENOMIC DNA]</scope>
    <source>
        <strain>COL</strain>
    </source>
</reference>
<accession>Q5HGD5</accession>
<dbReference type="EMBL" id="CP000046">
    <property type="protein sequence ID" value="AAW38146.1"/>
    <property type="molecule type" value="Genomic_DNA"/>
</dbReference>
<dbReference type="RefSeq" id="WP_000516261.1">
    <property type="nucleotide sequence ID" value="NZ_JBGOFO010000002.1"/>
</dbReference>
<dbReference type="SMR" id="Q5HGD5"/>
<dbReference type="KEGG" id="sac:SACOL1316"/>
<dbReference type="HOGENOM" id="CLU_004131_4_1_9"/>
<dbReference type="Proteomes" id="UP000000530">
    <property type="component" value="Chromosome"/>
</dbReference>
<dbReference type="GO" id="GO:0032300">
    <property type="term" value="C:mismatch repair complex"/>
    <property type="evidence" value="ECO:0007669"/>
    <property type="project" value="InterPro"/>
</dbReference>
<dbReference type="GO" id="GO:0005524">
    <property type="term" value="F:ATP binding"/>
    <property type="evidence" value="ECO:0007669"/>
    <property type="project" value="InterPro"/>
</dbReference>
<dbReference type="GO" id="GO:0016887">
    <property type="term" value="F:ATP hydrolysis activity"/>
    <property type="evidence" value="ECO:0007669"/>
    <property type="project" value="InterPro"/>
</dbReference>
<dbReference type="GO" id="GO:0140664">
    <property type="term" value="F:ATP-dependent DNA damage sensor activity"/>
    <property type="evidence" value="ECO:0007669"/>
    <property type="project" value="InterPro"/>
</dbReference>
<dbReference type="GO" id="GO:0030983">
    <property type="term" value="F:mismatched DNA binding"/>
    <property type="evidence" value="ECO:0007669"/>
    <property type="project" value="InterPro"/>
</dbReference>
<dbReference type="GO" id="GO:0006298">
    <property type="term" value="P:mismatch repair"/>
    <property type="evidence" value="ECO:0007669"/>
    <property type="project" value="UniProtKB-UniRule"/>
</dbReference>
<dbReference type="CDD" id="cd16926">
    <property type="entry name" value="HATPase_MutL-MLH-PMS-like"/>
    <property type="match status" value="1"/>
</dbReference>
<dbReference type="CDD" id="cd00782">
    <property type="entry name" value="MutL_Trans"/>
    <property type="match status" value="1"/>
</dbReference>
<dbReference type="FunFam" id="3.30.1370.100:FF:000004">
    <property type="entry name" value="DNA mismatch repair endonuclease MutL"/>
    <property type="match status" value="1"/>
</dbReference>
<dbReference type="FunFam" id="3.30.230.10:FF:000036">
    <property type="entry name" value="DNA mismatch repair endonuclease MutL"/>
    <property type="match status" value="1"/>
</dbReference>
<dbReference type="FunFam" id="3.30.565.10:FF:000003">
    <property type="entry name" value="DNA mismatch repair endonuclease MutL"/>
    <property type="match status" value="1"/>
</dbReference>
<dbReference type="Gene3D" id="3.30.230.10">
    <property type="match status" value="1"/>
</dbReference>
<dbReference type="Gene3D" id="3.30.565.10">
    <property type="entry name" value="Histidine kinase-like ATPase, C-terminal domain"/>
    <property type="match status" value="1"/>
</dbReference>
<dbReference type="Gene3D" id="3.30.1540.20">
    <property type="entry name" value="MutL, C-terminal domain, dimerisation subdomain"/>
    <property type="match status" value="1"/>
</dbReference>
<dbReference type="Gene3D" id="3.30.1370.100">
    <property type="entry name" value="MutL, C-terminal domain, regulatory subdomain"/>
    <property type="match status" value="1"/>
</dbReference>
<dbReference type="HAMAP" id="MF_00149">
    <property type="entry name" value="DNA_mis_repair"/>
    <property type="match status" value="1"/>
</dbReference>
<dbReference type="InterPro" id="IPR014762">
    <property type="entry name" value="DNA_mismatch_repair_CS"/>
</dbReference>
<dbReference type="InterPro" id="IPR020667">
    <property type="entry name" value="DNA_mismatch_repair_MutL"/>
</dbReference>
<dbReference type="InterPro" id="IPR013507">
    <property type="entry name" value="DNA_mismatch_S5_2-like"/>
</dbReference>
<dbReference type="InterPro" id="IPR036890">
    <property type="entry name" value="HATPase_C_sf"/>
</dbReference>
<dbReference type="InterPro" id="IPR002099">
    <property type="entry name" value="MutL/Mlh/PMS"/>
</dbReference>
<dbReference type="InterPro" id="IPR038973">
    <property type="entry name" value="MutL/Mlh/Pms-like"/>
</dbReference>
<dbReference type="InterPro" id="IPR014790">
    <property type="entry name" value="MutL_C"/>
</dbReference>
<dbReference type="InterPro" id="IPR042120">
    <property type="entry name" value="MutL_C_dimsub"/>
</dbReference>
<dbReference type="InterPro" id="IPR042121">
    <property type="entry name" value="MutL_C_regsub"/>
</dbReference>
<dbReference type="InterPro" id="IPR037198">
    <property type="entry name" value="MutL_C_sf"/>
</dbReference>
<dbReference type="InterPro" id="IPR020568">
    <property type="entry name" value="Ribosomal_Su5_D2-typ_SF"/>
</dbReference>
<dbReference type="InterPro" id="IPR014721">
    <property type="entry name" value="Ribsml_uS5_D2-typ_fold_subgr"/>
</dbReference>
<dbReference type="NCBIfam" id="TIGR00585">
    <property type="entry name" value="mutl"/>
    <property type="match status" value="1"/>
</dbReference>
<dbReference type="NCBIfam" id="NF000950">
    <property type="entry name" value="PRK00095.1-3"/>
    <property type="match status" value="1"/>
</dbReference>
<dbReference type="PANTHER" id="PTHR10073">
    <property type="entry name" value="DNA MISMATCH REPAIR PROTEIN MLH, PMS, MUTL"/>
    <property type="match status" value="1"/>
</dbReference>
<dbReference type="PANTHER" id="PTHR10073:SF12">
    <property type="entry name" value="DNA MISMATCH REPAIR PROTEIN MLH1"/>
    <property type="match status" value="1"/>
</dbReference>
<dbReference type="Pfam" id="PF01119">
    <property type="entry name" value="DNA_mis_repair"/>
    <property type="match status" value="1"/>
</dbReference>
<dbReference type="Pfam" id="PF13589">
    <property type="entry name" value="HATPase_c_3"/>
    <property type="match status" value="1"/>
</dbReference>
<dbReference type="Pfam" id="PF08676">
    <property type="entry name" value="MutL_C"/>
    <property type="match status" value="1"/>
</dbReference>
<dbReference type="SMART" id="SM01340">
    <property type="entry name" value="DNA_mis_repair"/>
    <property type="match status" value="1"/>
</dbReference>
<dbReference type="SMART" id="SM00853">
    <property type="entry name" value="MutL_C"/>
    <property type="match status" value="1"/>
</dbReference>
<dbReference type="SUPFAM" id="SSF55874">
    <property type="entry name" value="ATPase domain of HSP90 chaperone/DNA topoisomerase II/histidine kinase"/>
    <property type="match status" value="1"/>
</dbReference>
<dbReference type="SUPFAM" id="SSF118116">
    <property type="entry name" value="DNA mismatch repair protein MutL"/>
    <property type="match status" value="1"/>
</dbReference>
<dbReference type="SUPFAM" id="SSF54211">
    <property type="entry name" value="Ribosomal protein S5 domain 2-like"/>
    <property type="match status" value="1"/>
</dbReference>
<dbReference type="PROSITE" id="PS00058">
    <property type="entry name" value="DNA_MISMATCH_REPAIR_1"/>
    <property type="match status" value="1"/>
</dbReference>
<name>MUTL_STAAC</name>
<proteinExistence type="inferred from homology"/>
<evidence type="ECO:0000255" key="1">
    <source>
        <dbReference type="HAMAP-Rule" id="MF_00149"/>
    </source>
</evidence>
<evidence type="ECO:0000256" key="2">
    <source>
        <dbReference type="SAM" id="MobiDB-lite"/>
    </source>
</evidence>
<keyword id="KW-0227">DNA damage</keyword>
<keyword id="KW-0234">DNA repair</keyword>
<feature type="chain" id="PRO_0000177968" description="DNA mismatch repair protein MutL">
    <location>
        <begin position="1"/>
        <end position="669"/>
    </location>
</feature>
<feature type="region of interest" description="Disordered" evidence="2">
    <location>
        <begin position="356"/>
        <end position="382"/>
    </location>
</feature>
<feature type="compositionally biased region" description="Polar residues" evidence="2">
    <location>
        <begin position="361"/>
        <end position="378"/>
    </location>
</feature>
<organism>
    <name type="scientific">Staphylococcus aureus (strain COL)</name>
    <dbReference type="NCBI Taxonomy" id="93062"/>
    <lineage>
        <taxon>Bacteria</taxon>
        <taxon>Bacillati</taxon>
        <taxon>Bacillota</taxon>
        <taxon>Bacilli</taxon>
        <taxon>Bacillales</taxon>
        <taxon>Staphylococcaceae</taxon>
        <taxon>Staphylococcus</taxon>
    </lineage>
</organism>
<comment type="function">
    <text evidence="1">This protein is involved in the repair of mismatches in DNA. It is required for dam-dependent methyl-directed DNA mismatch repair. May act as a 'molecular matchmaker', a protein that promotes the formation of a stable complex between two or more DNA-binding proteins in an ATP-dependent manner without itself being part of a final effector complex.</text>
</comment>
<comment type="similarity">
    <text evidence="1">Belongs to the DNA mismatch repair MutL/HexB family.</text>
</comment>
<sequence length="669" mass="76855">MGKIKELQTSLANKIAAGEVVERPSSVVKELLENAIDAGATEISIEVEESGVQSIRVVDNGSGIEAEDLGLVFHRHATSKLDQDEDLFHIRTLGFRGEALASISSVAKVTLKTCTDNANGNEIYVENGEILNHKPAKAKKGTDILVESLFYNTPARLKYIKSLYTELGKITDIVNRMAMSHPDIRIALISDGKTMLSTNGSGRTNEVMAEIYGMKVARDLVHISGDTSDYHIEGFVAKPEHSRSNKHYISIFINGRYIKNFMLNKAILEGYHTLLTIGRFPICYINIEMDPILVDVNVHPTKLEVRLSKEEQLYQLIVSKIQEAFKDRILIPKNNLDYVPKKNKVLHSFEQQKIEFEQRQNTENNQEKTFSSEESNSKPFMEENQNDEIVIKEDSYNPFVTKTSESLIADDESSGYNNTREKDEDYFKKQQEILQEMDQTFDSNDGTTVQNYENKASDDYYDVNDIKGTKSKDPKRRIPYMEIVGQVHGTYIIAQNEFGMYMIDQHAAQERIKYEYFRDKIGEVTNEVQDLLIPLTFHFSKDEQLVIDQYKNELQQVGIMLEHFGGHDYIVSSYPVWFPKDEVEEIIKDMIELILEEKKVDIKKLREDVAIMMSCKKSIKANHYLQKHEMSDLIDQLREAEDPFTCPHGRPIIINFSKYELEKLFKRVM</sequence>
<gene>
    <name evidence="1" type="primary">mutL</name>
    <name type="ordered locus">SACOL1316</name>
</gene>